<reference key="1">
    <citation type="journal article" date="2002" name="Environ. Microbiol.">
        <title>Complete genome sequence and comparative analysis of the metabolically versatile Pseudomonas putida KT2440.</title>
        <authorList>
            <person name="Nelson K.E."/>
            <person name="Weinel C."/>
            <person name="Paulsen I.T."/>
            <person name="Dodson R.J."/>
            <person name="Hilbert H."/>
            <person name="Martins dos Santos V.A.P."/>
            <person name="Fouts D.E."/>
            <person name="Gill S.R."/>
            <person name="Pop M."/>
            <person name="Holmes M."/>
            <person name="Brinkac L.M."/>
            <person name="Beanan M.J."/>
            <person name="DeBoy R.T."/>
            <person name="Daugherty S.C."/>
            <person name="Kolonay J.F."/>
            <person name="Madupu R."/>
            <person name="Nelson W.C."/>
            <person name="White O."/>
            <person name="Peterson J.D."/>
            <person name="Khouri H.M."/>
            <person name="Hance I."/>
            <person name="Chris Lee P."/>
            <person name="Holtzapple E.K."/>
            <person name="Scanlan D."/>
            <person name="Tran K."/>
            <person name="Moazzez A."/>
            <person name="Utterback T.R."/>
            <person name="Rizzo M."/>
            <person name="Lee K."/>
            <person name="Kosack D."/>
            <person name="Moestl D."/>
            <person name="Wedler H."/>
            <person name="Lauber J."/>
            <person name="Stjepandic D."/>
            <person name="Hoheisel J."/>
            <person name="Straetz M."/>
            <person name="Heim S."/>
            <person name="Kiewitz C."/>
            <person name="Eisen J.A."/>
            <person name="Timmis K.N."/>
            <person name="Duesterhoeft A."/>
            <person name="Tuemmler B."/>
            <person name="Fraser C.M."/>
        </authorList>
    </citation>
    <scope>NUCLEOTIDE SEQUENCE [LARGE SCALE GENOMIC DNA]</scope>
    <source>
        <strain>ATCC 47054 / DSM 6125 / CFBP 8728 / NCIMB 11950 / KT2440</strain>
    </source>
</reference>
<name>ISPE_PSEPK</name>
<keyword id="KW-0067">ATP-binding</keyword>
<keyword id="KW-0414">Isoprene biosynthesis</keyword>
<keyword id="KW-0418">Kinase</keyword>
<keyword id="KW-0547">Nucleotide-binding</keyword>
<keyword id="KW-1185">Reference proteome</keyword>
<keyword id="KW-0808">Transferase</keyword>
<evidence type="ECO:0000255" key="1">
    <source>
        <dbReference type="HAMAP-Rule" id="MF_00061"/>
    </source>
</evidence>
<organism>
    <name type="scientific">Pseudomonas putida (strain ATCC 47054 / DSM 6125 / CFBP 8728 / NCIMB 11950 / KT2440)</name>
    <dbReference type="NCBI Taxonomy" id="160488"/>
    <lineage>
        <taxon>Bacteria</taxon>
        <taxon>Pseudomonadati</taxon>
        <taxon>Pseudomonadota</taxon>
        <taxon>Gammaproteobacteria</taxon>
        <taxon>Pseudomonadales</taxon>
        <taxon>Pseudomonadaceae</taxon>
        <taxon>Pseudomonas</taxon>
    </lineage>
</organism>
<accession>Q88PX5</accession>
<dbReference type="EC" id="2.7.1.148" evidence="1"/>
<dbReference type="EMBL" id="AE015451">
    <property type="protein sequence ID" value="AAN66348.1"/>
    <property type="molecule type" value="Genomic_DNA"/>
</dbReference>
<dbReference type="RefSeq" id="NP_742884.1">
    <property type="nucleotide sequence ID" value="NC_002947.4"/>
</dbReference>
<dbReference type="RefSeq" id="WP_010951968.1">
    <property type="nucleotide sequence ID" value="NZ_CP169744.1"/>
</dbReference>
<dbReference type="SMR" id="Q88PX5"/>
<dbReference type="STRING" id="160488.PP_0723"/>
<dbReference type="PaxDb" id="160488-PP_0723"/>
<dbReference type="GeneID" id="83678072"/>
<dbReference type="KEGG" id="ppu:PP_0723"/>
<dbReference type="PATRIC" id="fig|160488.4.peg.772"/>
<dbReference type="eggNOG" id="COG1947">
    <property type="taxonomic scope" value="Bacteria"/>
</dbReference>
<dbReference type="HOGENOM" id="CLU_053057_3_0_6"/>
<dbReference type="OrthoDB" id="9809438at2"/>
<dbReference type="PhylomeDB" id="Q88PX5"/>
<dbReference type="BioCyc" id="PPUT160488:G1G01-798-MONOMER"/>
<dbReference type="UniPathway" id="UPA00056">
    <property type="reaction ID" value="UER00094"/>
</dbReference>
<dbReference type="Proteomes" id="UP000000556">
    <property type="component" value="Chromosome"/>
</dbReference>
<dbReference type="GO" id="GO:0050515">
    <property type="term" value="F:4-(cytidine 5'-diphospho)-2-C-methyl-D-erythritol kinase activity"/>
    <property type="evidence" value="ECO:0007669"/>
    <property type="project" value="UniProtKB-UniRule"/>
</dbReference>
<dbReference type="GO" id="GO:0005524">
    <property type="term" value="F:ATP binding"/>
    <property type="evidence" value="ECO:0007669"/>
    <property type="project" value="UniProtKB-UniRule"/>
</dbReference>
<dbReference type="GO" id="GO:0019288">
    <property type="term" value="P:isopentenyl diphosphate biosynthetic process, methylerythritol 4-phosphate pathway"/>
    <property type="evidence" value="ECO:0007669"/>
    <property type="project" value="UniProtKB-UniRule"/>
</dbReference>
<dbReference type="GO" id="GO:0016114">
    <property type="term" value="P:terpenoid biosynthetic process"/>
    <property type="evidence" value="ECO:0007669"/>
    <property type="project" value="InterPro"/>
</dbReference>
<dbReference type="FunFam" id="3.30.230.10:FF:000022">
    <property type="entry name" value="4-diphosphocytidyl-2-C-methyl-D-erythritol kinase"/>
    <property type="match status" value="1"/>
</dbReference>
<dbReference type="Gene3D" id="3.30.230.10">
    <property type="match status" value="1"/>
</dbReference>
<dbReference type="Gene3D" id="3.30.70.890">
    <property type="entry name" value="GHMP kinase, C-terminal domain"/>
    <property type="match status" value="1"/>
</dbReference>
<dbReference type="HAMAP" id="MF_00061">
    <property type="entry name" value="IspE"/>
    <property type="match status" value="1"/>
</dbReference>
<dbReference type="InterPro" id="IPR013750">
    <property type="entry name" value="GHMP_kinase_C_dom"/>
</dbReference>
<dbReference type="InterPro" id="IPR036554">
    <property type="entry name" value="GHMP_kinase_C_sf"/>
</dbReference>
<dbReference type="InterPro" id="IPR006204">
    <property type="entry name" value="GHMP_kinase_N_dom"/>
</dbReference>
<dbReference type="InterPro" id="IPR004424">
    <property type="entry name" value="IspE"/>
</dbReference>
<dbReference type="InterPro" id="IPR020568">
    <property type="entry name" value="Ribosomal_Su5_D2-typ_SF"/>
</dbReference>
<dbReference type="InterPro" id="IPR014721">
    <property type="entry name" value="Ribsml_uS5_D2-typ_fold_subgr"/>
</dbReference>
<dbReference type="NCBIfam" id="TIGR00154">
    <property type="entry name" value="ispE"/>
    <property type="match status" value="1"/>
</dbReference>
<dbReference type="PANTHER" id="PTHR43527">
    <property type="entry name" value="4-DIPHOSPHOCYTIDYL-2-C-METHYL-D-ERYTHRITOL KINASE, CHLOROPLASTIC"/>
    <property type="match status" value="1"/>
</dbReference>
<dbReference type="PANTHER" id="PTHR43527:SF2">
    <property type="entry name" value="4-DIPHOSPHOCYTIDYL-2-C-METHYL-D-ERYTHRITOL KINASE, CHLOROPLASTIC"/>
    <property type="match status" value="1"/>
</dbReference>
<dbReference type="Pfam" id="PF08544">
    <property type="entry name" value="GHMP_kinases_C"/>
    <property type="match status" value="1"/>
</dbReference>
<dbReference type="Pfam" id="PF00288">
    <property type="entry name" value="GHMP_kinases_N"/>
    <property type="match status" value="1"/>
</dbReference>
<dbReference type="PIRSF" id="PIRSF010376">
    <property type="entry name" value="IspE"/>
    <property type="match status" value="1"/>
</dbReference>
<dbReference type="SUPFAM" id="SSF55060">
    <property type="entry name" value="GHMP Kinase, C-terminal domain"/>
    <property type="match status" value="1"/>
</dbReference>
<dbReference type="SUPFAM" id="SSF54211">
    <property type="entry name" value="Ribosomal protein S5 domain 2-like"/>
    <property type="match status" value="1"/>
</dbReference>
<sequence length="286" mass="30900">MQKLTLPAPAKLNLWLHIIGRRADGYHELETVFQFLDHGDELSFALRDDGVIRLHTEIEAVPHDSNLIVRAARMLQAQSGTTLGADIWLTKVLPMGGGIGGGSSDAATTLLALAHLWQLDWDEDRLAALGLSLGADVPVFVRGHAAFAQGVGEQLTPVDPIEPWYVVLVPQVSVSTVEIFSHPQLTRDSLPLKMRPVPEGNSRNDCQPVVEQNYPEVRNALNSLGKFTEARLTGTGSCVFGAFPSKAEADKVLALLSATQTGFVAKGSNVSMLHRKLQSLVKKSSA</sequence>
<feature type="chain" id="PRO_0000189250" description="4-diphosphocytidyl-2-C-methyl-D-erythritol kinase">
    <location>
        <begin position="1"/>
        <end position="286"/>
    </location>
</feature>
<feature type="active site" evidence="1">
    <location>
        <position position="11"/>
    </location>
</feature>
<feature type="active site" evidence="1">
    <location>
        <position position="136"/>
    </location>
</feature>
<feature type="binding site" evidence="1">
    <location>
        <begin position="94"/>
        <end position="104"/>
    </location>
    <ligand>
        <name>ATP</name>
        <dbReference type="ChEBI" id="CHEBI:30616"/>
    </ligand>
</feature>
<protein>
    <recommendedName>
        <fullName evidence="1">4-diphosphocytidyl-2-C-methyl-D-erythritol kinase</fullName>
        <shortName evidence="1">CMK</shortName>
        <ecNumber evidence="1">2.7.1.148</ecNumber>
    </recommendedName>
    <alternativeName>
        <fullName evidence="1">4-(cytidine-5'-diphospho)-2-C-methyl-D-erythritol kinase</fullName>
    </alternativeName>
</protein>
<comment type="function">
    <text evidence="1">Catalyzes the phosphorylation of the position 2 hydroxy group of 4-diphosphocytidyl-2C-methyl-D-erythritol.</text>
</comment>
<comment type="catalytic activity">
    <reaction evidence="1">
        <text>4-CDP-2-C-methyl-D-erythritol + ATP = 4-CDP-2-C-methyl-D-erythritol 2-phosphate + ADP + H(+)</text>
        <dbReference type="Rhea" id="RHEA:18437"/>
        <dbReference type="ChEBI" id="CHEBI:15378"/>
        <dbReference type="ChEBI" id="CHEBI:30616"/>
        <dbReference type="ChEBI" id="CHEBI:57823"/>
        <dbReference type="ChEBI" id="CHEBI:57919"/>
        <dbReference type="ChEBI" id="CHEBI:456216"/>
        <dbReference type="EC" id="2.7.1.148"/>
    </reaction>
</comment>
<comment type="pathway">
    <text evidence="1">Isoprenoid biosynthesis; isopentenyl diphosphate biosynthesis via DXP pathway; isopentenyl diphosphate from 1-deoxy-D-xylulose 5-phosphate: step 3/6.</text>
</comment>
<comment type="similarity">
    <text evidence="1">Belongs to the GHMP kinase family. IspE subfamily.</text>
</comment>
<proteinExistence type="inferred from homology"/>
<gene>
    <name evidence="1" type="primary">ispE</name>
    <name type="ordered locus">PP_0723</name>
</gene>